<protein>
    <recommendedName>
        <fullName>ATP phosphoribosyltransferase</fullName>
        <shortName>ATP-PRT</shortName>
        <shortName>ATP-PRTase</shortName>
        <ecNumber>2.4.2.17</ecNumber>
    </recommendedName>
</protein>
<reference key="1">
    <citation type="journal article" date="2001" name="Proc. Natl. Acad. Sci. U.S.A.">
        <title>Complete genome sequence of Caulobacter crescentus.</title>
        <authorList>
            <person name="Nierman W.C."/>
            <person name="Feldblyum T.V."/>
            <person name="Laub M.T."/>
            <person name="Paulsen I.T."/>
            <person name="Nelson K.E."/>
            <person name="Eisen J.A."/>
            <person name="Heidelberg J.F."/>
            <person name="Alley M.R.K."/>
            <person name="Ohta N."/>
            <person name="Maddock J.R."/>
            <person name="Potocka I."/>
            <person name="Nelson W.C."/>
            <person name="Newton A."/>
            <person name="Stephens C."/>
            <person name="Phadke N.D."/>
            <person name="Ely B."/>
            <person name="DeBoy R.T."/>
            <person name="Dodson R.J."/>
            <person name="Durkin A.S."/>
            <person name="Gwinn M.L."/>
            <person name="Haft D.H."/>
            <person name="Kolonay J.F."/>
            <person name="Smit J."/>
            <person name="Craven M.B."/>
            <person name="Khouri H.M."/>
            <person name="Shetty J."/>
            <person name="Berry K.J."/>
            <person name="Utterback T.R."/>
            <person name="Tran K."/>
            <person name="Wolf A.M."/>
            <person name="Vamathevan J.J."/>
            <person name="Ermolaeva M.D."/>
            <person name="White O."/>
            <person name="Salzberg S.L."/>
            <person name="Venter J.C."/>
            <person name="Shapiro L."/>
            <person name="Fraser C.M."/>
        </authorList>
    </citation>
    <scope>NUCLEOTIDE SEQUENCE [LARGE SCALE GENOMIC DNA]</scope>
    <source>
        <strain>ATCC 19089 / CIP 103742 / CB 15</strain>
    </source>
</reference>
<name>HIS1_CAUVC</name>
<evidence type="ECO:0000250" key="1"/>
<evidence type="ECO:0000305" key="2"/>
<organism>
    <name type="scientific">Caulobacter vibrioides (strain ATCC 19089 / CIP 103742 / CB 15)</name>
    <name type="common">Caulobacter crescentus</name>
    <dbReference type="NCBI Taxonomy" id="190650"/>
    <lineage>
        <taxon>Bacteria</taxon>
        <taxon>Pseudomonadati</taxon>
        <taxon>Pseudomonadota</taxon>
        <taxon>Alphaproteobacteria</taxon>
        <taxon>Caulobacterales</taxon>
        <taxon>Caulobacteraceae</taxon>
        <taxon>Caulobacter</taxon>
    </lineage>
</organism>
<comment type="function">
    <text evidence="1">Catalyzes the condensation of ATP and 5-phosphoribose 1-diphosphate to form N'-(5'-phosphoribosyl)-ATP (PR-ATP). Has a crucial role in the pathway because the rate of histidine biosynthesis seems to be controlled primarily by regulation of HisG enzymatic activity (By similarity).</text>
</comment>
<comment type="catalytic activity">
    <reaction>
        <text>1-(5-phospho-beta-D-ribosyl)-ATP + diphosphate = 5-phospho-alpha-D-ribose 1-diphosphate + ATP</text>
        <dbReference type="Rhea" id="RHEA:18473"/>
        <dbReference type="ChEBI" id="CHEBI:30616"/>
        <dbReference type="ChEBI" id="CHEBI:33019"/>
        <dbReference type="ChEBI" id="CHEBI:58017"/>
        <dbReference type="ChEBI" id="CHEBI:73183"/>
        <dbReference type="EC" id="2.4.2.17"/>
    </reaction>
</comment>
<comment type="cofactor">
    <cofactor evidence="1">
        <name>Mg(2+)</name>
        <dbReference type="ChEBI" id="CHEBI:18420"/>
    </cofactor>
</comment>
<comment type="activity regulation">
    <text evidence="1">Feedback inhibited by histidine.</text>
</comment>
<comment type="pathway">
    <text>Amino-acid biosynthesis; L-histidine biosynthesis; L-histidine from 5-phospho-alpha-D-ribose 1-diphosphate: step 1/9.</text>
</comment>
<comment type="subcellular location">
    <subcellularLocation>
        <location evidence="1">Cytoplasm</location>
    </subcellularLocation>
</comment>
<comment type="similarity">
    <text evidence="2">Belongs to the ATP phosphoribosyltransferase family. Long subfamily.</text>
</comment>
<dbReference type="EC" id="2.4.2.17"/>
<dbReference type="EMBL" id="AE005673">
    <property type="protein sequence ID" value="AAK25473.1"/>
    <property type="molecule type" value="Genomic_DNA"/>
</dbReference>
<dbReference type="PIR" id="E87684">
    <property type="entry name" value="E87684"/>
</dbReference>
<dbReference type="RefSeq" id="NP_422305.1">
    <property type="nucleotide sequence ID" value="NC_002696.2"/>
</dbReference>
<dbReference type="RefSeq" id="WP_010921340.1">
    <property type="nucleotide sequence ID" value="NC_002696.2"/>
</dbReference>
<dbReference type="SMR" id="Q9A2P5"/>
<dbReference type="STRING" id="190650.CC_3511"/>
<dbReference type="EnsemblBacteria" id="AAK25473">
    <property type="protein sequence ID" value="AAK25473"/>
    <property type="gene ID" value="CC_3511"/>
</dbReference>
<dbReference type="KEGG" id="ccr:CC_3511"/>
<dbReference type="PATRIC" id="fig|190650.5.peg.3521"/>
<dbReference type="eggNOG" id="COG0040">
    <property type="taxonomic scope" value="Bacteria"/>
</dbReference>
<dbReference type="HOGENOM" id="CLU_038115_0_1_5"/>
<dbReference type="BioCyc" id="CAULO:CC3511-MONOMER"/>
<dbReference type="UniPathway" id="UPA00031">
    <property type="reaction ID" value="UER00006"/>
</dbReference>
<dbReference type="Proteomes" id="UP000001816">
    <property type="component" value="Chromosome"/>
</dbReference>
<dbReference type="GO" id="GO:0005737">
    <property type="term" value="C:cytoplasm"/>
    <property type="evidence" value="ECO:0007669"/>
    <property type="project" value="UniProtKB-SubCell"/>
</dbReference>
<dbReference type="GO" id="GO:0005524">
    <property type="term" value="F:ATP binding"/>
    <property type="evidence" value="ECO:0007669"/>
    <property type="project" value="UniProtKB-KW"/>
</dbReference>
<dbReference type="GO" id="GO:0003879">
    <property type="term" value="F:ATP phosphoribosyltransferase activity"/>
    <property type="evidence" value="ECO:0007669"/>
    <property type="project" value="UniProtKB-UniRule"/>
</dbReference>
<dbReference type="GO" id="GO:0000287">
    <property type="term" value="F:magnesium ion binding"/>
    <property type="evidence" value="ECO:0007669"/>
    <property type="project" value="UniProtKB-UniRule"/>
</dbReference>
<dbReference type="GO" id="GO:0000105">
    <property type="term" value="P:L-histidine biosynthetic process"/>
    <property type="evidence" value="ECO:0007669"/>
    <property type="project" value="UniProtKB-UniRule"/>
</dbReference>
<dbReference type="CDD" id="cd13593">
    <property type="entry name" value="PBP2_HisGL3"/>
    <property type="match status" value="1"/>
</dbReference>
<dbReference type="Gene3D" id="3.40.190.10">
    <property type="entry name" value="Periplasmic binding protein-like II"/>
    <property type="match status" value="2"/>
</dbReference>
<dbReference type="HAMAP" id="MF_00079">
    <property type="entry name" value="HisG_Long"/>
    <property type="match status" value="1"/>
</dbReference>
<dbReference type="InterPro" id="IPR020621">
    <property type="entry name" value="ATP-PRT_HisG_long"/>
</dbReference>
<dbReference type="InterPro" id="IPR013820">
    <property type="entry name" value="ATP_PRibTrfase_cat"/>
</dbReference>
<dbReference type="InterPro" id="IPR018198">
    <property type="entry name" value="ATP_PRibTrfase_CS"/>
</dbReference>
<dbReference type="InterPro" id="IPR001348">
    <property type="entry name" value="ATP_PRibTrfase_HisG"/>
</dbReference>
<dbReference type="NCBIfam" id="TIGR00070">
    <property type="entry name" value="hisG"/>
    <property type="match status" value="1"/>
</dbReference>
<dbReference type="PANTHER" id="PTHR21403:SF8">
    <property type="entry name" value="ATP PHOSPHORIBOSYLTRANSFERASE"/>
    <property type="match status" value="1"/>
</dbReference>
<dbReference type="PANTHER" id="PTHR21403">
    <property type="entry name" value="ATP PHOSPHORIBOSYLTRANSFERASE ATP-PRTASE"/>
    <property type="match status" value="1"/>
</dbReference>
<dbReference type="Pfam" id="PF01634">
    <property type="entry name" value="HisG"/>
    <property type="match status" value="1"/>
</dbReference>
<dbReference type="SUPFAM" id="SSF53850">
    <property type="entry name" value="Periplasmic binding protein-like II"/>
    <property type="match status" value="1"/>
</dbReference>
<dbReference type="PROSITE" id="PS01316">
    <property type="entry name" value="ATP_P_PHORIBOSYLTR"/>
    <property type="match status" value="1"/>
</dbReference>
<gene>
    <name type="primary">hisG</name>
    <name type="ordered locus">CC_3511</name>
</gene>
<keyword id="KW-0028">Amino-acid biosynthesis</keyword>
<keyword id="KW-0067">ATP-binding</keyword>
<keyword id="KW-0963">Cytoplasm</keyword>
<keyword id="KW-0328">Glycosyltransferase</keyword>
<keyword id="KW-0368">Histidine biosynthesis</keyword>
<keyword id="KW-0460">Magnesium</keyword>
<keyword id="KW-0479">Metal-binding</keyword>
<keyword id="KW-0547">Nucleotide-binding</keyword>
<keyword id="KW-1185">Reference proteome</keyword>
<keyword id="KW-0808">Transferase</keyword>
<sequence>MSTPMIFAIPSKGRLKDQVEAWLADCGFKLEMTGGARGYSAELSGLPGVSVRLLSAGDIAAGLDSGDLHLGVTGEDLLRERGDDMDSRVMLLRALGFGRADLVVTAPKNWLDVDTMADVDEVGHAHLARTGRRLRVATKYVTQTRAFFARHGVADYRIVESSGATEGAPAAGAAELVVDITTTGATLAANGLKILSDGVILKSQAQLTASLTAGWNGEQLDALRRLLSVVEAKGRAGKLATLVWPAEQDRAAQDAVAAFIARGGSRRANGALLATADLFDAAAALAEAGVEPVTVSRPDYVFESRSAVLDRFAEALKSKI</sequence>
<accession>Q9A2P5</accession>
<feature type="chain" id="PRO_0000151842" description="ATP phosphoribosyltransferase">
    <location>
        <begin position="1"/>
        <end position="320"/>
    </location>
</feature>
<proteinExistence type="inferred from homology"/>